<comment type="function">
    <text evidence="1">One of the primary rRNA binding proteins. Required for association of the 30S and 50S subunits to form the 70S ribosome, for tRNA binding and peptide bond formation. It has been suggested to have peptidyltransferase activity; this is somewhat controversial. Makes several contacts with the 16S rRNA in the 70S ribosome.</text>
</comment>
<comment type="subunit">
    <text evidence="1">Part of the 50S ribosomal subunit. Forms a bridge to the 30S subunit in the 70S ribosome.</text>
</comment>
<comment type="similarity">
    <text evidence="1">Belongs to the universal ribosomal protein uL2 family.</text>
</comment>
<sequence>MAIVKCKPTSAGRRFVVKVVNQELHKGAPYAPLLEKKSKSGGRNNNGRITTRHIGGGHKQHYRLVDFRRNKDGIPAIVERVEYDPNRTAHIALLKYADGERRYIIAPKGVAAGDQLISGIGAPIKAGNSMPLRNIPVGSTVHGIELKPGKGAQIARSAGASAQLVAREGAYVTLRLRSGEMRKVLAECRATLGEVSNSEHSLRSLGKAGATRWRGVRPTVRGVAMNPVDHPHGGGEGRTSAGRHPVSPWGLQTKGKKTRSNKRTDNMIVRRRK</sequence>
<keyword id="KW-0687">Ribonucleoprotein</keyword>
<keyword id="KW-0689">Ribosomal protein</keyword>
<keyword id="KW-0694">RNA-binding</keyword>
<keyword id="KW-0699">rRNA-binding</keyword>
<dbReference type="EMBL" id="CP000744">
    <property type="protein sequence ID" value="ABR86528.1"/>
    <property type="molecule type" value="Genomic_DNA"/>
</dbReference>
<dbReference type="RefSeq" id="WP_003103878.1">
    <property type="nucleotide sequence ID" value="NC_009656.1"/>
</dbReference>
<dbReference type="SMR" id="A6UZJ1"/>
<dbReference type="GeneID" id="77219201"/>
<dbReference type="KEGG" id="pap:PSPA7_0840"/>
<dbReference type="HOGENOM" id="CLU_036235_2_1_6"/>
<dbReference type="Proteomes" id="UP000001582">
    <property type="component" value="Chromosome"/>
</dbReference>
<dbReference type="GO" id="GO:0015934">
    <property type="term" value="C:large ribosomal subunit"/>
    <property type="evidence" value="ECO:0007669"/>
    <property type="project" value="InterPro"/>
</dbReference>
<dbReference type="GO" id="GO:0019843">
    <property type="term" value="F:rRNA binding"/>
    <property type="evidence" value="ECO:0007669"/>
    <property type="project" value="UniProtKB-UniRule"/>
</dbReference>
<dbReference type="GO" id="GO:0003735">
    <property type="term" value="F:structural constituent of ribosome"/>
    <property type="evidence" value="ECO:0007669"/>
    <property type="project" value="InterPro"/>
</dbReference>
<dbReference type="GO" id="GO:0016740">
    <property type="term" value="F:transferase activity"/>
    <property type="evidence" value="ECO:0007669"/>
    <property type="project" value="InterPro"/>
</dbReference>
<dbReference type="GO" id="GO:0002181">
    <property type="term" value="P:cytoplasmic translation"/>
    <property type="evidence" value="ECO:0007669"/>
    <property type="project" value="TreeGrafter"/>
</dbReference>
<dbReference type="FunFam" id="2.30.30.30:FF:000001">
    <property type="entry name" value="50S ribosomal protein L2"/>
    <property type="match status" value="1"/>
</dbReference>
<dbReference type="FunFam" id="2.40.50.140:FF:000003">
    <property type="entry name" value="50S ribosomal protein L2"/>
    <property type="match status" value="1"/>
</dbReference>
<dbReference type="FunFam" id="4.10.950.10:FF:000001">
    <property type="entry name" value="50S ribosomal protein L2"/>
    <property type="match status" value="1"/>
</dbReference>
<dbReference type="Gene3D" id="2.30.30.30">
    <property type="match status" value="1"/>
</dbReference>
<dbReference type="Gene3D" id="2.40.50.140">
    <property type="entry name" value="Nucleic acid-binding proteins"/>
    <property type="match status" value="1"/>
</dbReference>
<dbReference type="Gene3D" id="4.10.950.10">
    <property type="entry name" value="Ribosomal protein L2, domain 3"/>
    <property type="match status" value="1"/>
</dbReference>
<dbReference type="HAMAP" id="MF_01320_B">
    <property type="entry name" value="Ribosomal_uL2_B"/>
    <property type="match status" value="1"/>
</dbReference>
<dbReference type="InterPro" id="IPR012340">
    <property type="entry name" value="NA-bd_OB-fold"/>
</dbReference>
<dbReference type="InterPro" id="IPR014722">
    <property type="entry name" value="Rib_uL2_dom2"/>
</dbReference>
<dbReference type="InterPro" id="IPR002171">
    <property type="entry name" value="Ribosomal_uL2"/>
</dbReference>
<dbReference type="InterPro" id="IPR005880">
    <property type="entry name" value="Ribosomal_uL2_bac/org-type"/>
</dbReference>
<dbReference type="InterPro" id="IPR022669">
    <property type="entry name" value="Ribosomal_uL2_C"/>
</dbReference>
<dbReference type="InterPro" id="IPR022671">
    <property type="entry name" value="Ribosomal_uL2_CS"/>
</dbReference>
<dbReference type="InterPro" id="IPR014726">
    <property type="entry name" value="Ribosomal_uL2_dom3"/>
</dbReference>
<dbReference type="InterPro" id="IPR022666">
    <property type="entry name" value="Ribosomal_uL2_RNA-bd_dom"/>
</dbReference>
<dbReference type="InterPro" id="IPR008991">
    <property type="entry name" value="Translation_prot_SH3-like_sf"/>
</dbReference>
<dbReference type="NCBIfam" id="TIGR01171">
    <property type="entry name" value="rplB_bact"/>
    <property type="match status" value="1"/>
</dbReference>
<dbReference type="PANTHER" id="PTHR13691:SF5">
    <property type="entry name" value="LARGE RIBOSOMAL SUBUNIT PROTEIN UL2M"/>
    <property type="match status" value="1"/>
</dbReference>
<dbReference type="PANTHER" id="PTHR13691">
    <property type="entry name" value="RIBOSOMAL PROTEIN L2"/>
    <property type="match status" value="1"/>
</dbReference>
<dbReference type="Pfam" id="PF00181">
    <property type="entry name" value="Ribosomal_L2"/>
    <property type="match status" value="1"/>
</dbReference>
<dbReference type="Pfam" id="PF03947">
    <property type="entry name" value="Ribosomal_L2_C"/>
    <property type="match status" value="1"/>
</dbReference>
<dbReference type="PIRSF" id="PIRSF002158">
    <property type="entry name" value="Ribosomal_L2"/>
    <property type="match status" value="1"/>
</dbReference>
<dbReference type="SMART" id="SM01383">
    <property type="entry name" value="Ribosomal_L2"/>
    <property type="match status" value="1"/>
</dbReference>
<dbReference type="SMART" id="SM01382">
    <property type="entry name" value="Ribosomal_L2_C"/>
    <property type="match status" value="1"/>
</dbReference>
<dbReference type="SUPFAM" id="SSF50249">
    <property type="entry name" value="Nucleic acid-binding proteins"/>
    <property type="match status" value="1"/>
</dbReference>
<dbReference type="SUPFAM" id="SSF50104">
    <property type="entry name" value="Translation proteins SH3-like domain"/>
    <property type="match status" value="1"/>
</dbReference>
<dbReference type="PROSITE" id="PS00467">
    <property type="entry name" value="RIBOSOMAL_L2"/>
    <property type="match status" value="1"/>
</dbReference>
<evidence type="ECO:0000255" key="1">
    <source>
        <dbReference type="HAMAP-Rule" id="MF_01320"/>
    </source>
</evidence>
<evidence type="ECO:0000256" key="2">
    <source>
        <dbReference type="SAM" id="MobiDB-lite"/>
    </source>
</evidence>
<evidence type="ECO:0000305" key="3"/>
<feature type="chain" id="PRO_1000051941" description="Large ribosomal subunit protein uL2">
    <location>
        <begin position="1"/>
        <end position="273"/>
    </location>
</feature>
<feature type="region of interest" description="Disordered" evidence="2">
    <location>
        <begin position="34"/>
        <end position="54"/>
    </location>
</feature>
<feature type="region of interest" description="Disordered" evidence="2">
    <location>
        <begin position="223"/>
        <end position="273"/>
    </location>
</feature>
<name>RL2_PSEP7</name>
<accession>A6UZJ1</accession>
<protein>
    <recommendedName>
        <fullName evidence="1">Large ribosomal subunit protein uL2</fullName>
    </recommendedName>
    <alternativeName>
        <fullName evidence="3">50S ribosomal protein L2</fullName>
    </alternativeName>
</protein>
<proteinExistence type="inferred from homology"/>
<reference key="1">
    <citation type="submission" date="2007-06" db="EMBL/GenBank/DDBJ databases">
        <authorList>
            <person name="Dodson R.J."/>
            <person name="Harkins D."/>
            <person name="Paulsen I.T."/>
        </authorList>
    </citation>
    <scope>NUCLEOTIDE SEQUENCE [LARGE SCALE GENOMIC DNA]</scope>
    <source>
        <strain>DSM 24068 / PA7</strain>
    </source>
</reference>
<organism>
    <name type="scientific">Pseudomonas paraeruginosa (strain DSM 24068 / PA7)</name>
    <name type="common">Pseudomonas aeruginosa (strain PA7)</name>
    <dbReference type="NCBI Taxonomy" id="381754"/>
    <lineage>
        <taxon>Bacteria</taxon>
        <taxon>Pseudomonadati</taxon>
        <taxon>Pseudomonadota</taxon>
        <taxon>Gammaproteobacteria</taxon>
        <taxon>Pseudomonadales</taxon>
        <taxon>Pseudomonadaceae</taxon>
        <taxon>Pseudomonas</taxon>
        <taxon>Pseudomonas paraeruginosa</taxon>
    </lineage>
</organism>
<gene>
    <name evidence="1" type="primary">rplB</name>
    <name type="ordered locus">PSPA7_0840</name>
</gene>